<gene>
    <name evidence="1" type="primary">miaB</name>
    <name type="ordered locus">LBL_0882</name>
</gene>
<evidence type="ECO:0000255" key="1">
    <source>
        <dbReference type="HAMAP-Rule" id="MF_01864"/>
    </source>
</evidence>
<evidence type="ECO:0000255" key="2">
    <source>
        <dbReference type="PROSITE-ProRule" id="PRU01266"/>
    </source>
</evidence>
<name>MIAB_LEPBL</name>
<comment type="function">
    <text evidence="1">Catalyzes the methylthiolation of N6-(dimethylallyl)adenosine (i(6)A), leading to the formation of 2-methylthio-N6-(dimethylallyl)adenosine (ms(2)i(6)A) at position 37 in tRNAs that read codons beginning with uridine.</text>
</comment>
<comment type="catalytic activity">
    <reaction evidence="1">
        <text>N(6)-dimethylallyladenosine(37) in tRNA + (sulfur carrier)-SH + AH2 + 2 S-adenosyl-L-methionine = 2-methylsulfanyl-N(6)-dimethylallyladenosine(37) in tRNA + (sulfur carrier)-H + 5'-deoxyadenosine + L-methionine + A + S-adenosyl-L-homocysteine + 2 H(+)</text>
        <dbReference type="Rhea" id="RHEA:37067"/>
        <dbReference type="Rhea" id="RHEA-COMP:10375"/>
        <dbReference type="Rhea" id="RHEA-COMP:10376"/>
        <dbReference type="Rhea" id="RHEA-COMP:14737"/>
        <dbReference type="Rhea" id="RHEA-COMP:14739"/>
        <dbReference type="ChEBI" id="CHEBI:13193"/>
        <dbReference type="ChEBI" id="CHEBI:15378"/>
        <dbReference type="ChEBI" id="CHEBI:17319"/>
        <dbReference type="ChEBI" id="CHEBI:17499"/>
        <dbReference type="ChEBI" id="CHEBI:29917"/>
        <dbReference type="ChEBI" id="CHEBI:57844"/>
        <dbReference type="ChEBI" id="CHEBI:57856"/>
        <dbReference type="ChEBI" id="CHEBI:59789"/>
        <dbReference type="ChEBI" id="CHEBI:64428"/>
        <dbReference type="ChEBI" id="CHEBI:74415"/>
        <dbReference type="ChEBI" id="CHEBI:74417"/>
        <dbReference type="EC" id="2.8.4.3"/>
    </reaction>
</comment>
<comment type="cofactor">
    <cofactor evidence="1">
        <name>[4Fe-4S] cluster</name>
        <dbReference type="ChEBI" id="CHEBI:49883"/>
    </cofactor>
    <text evidence="1">Binds 2 [4Fe-4S] clusters. One cluster is coordinated with 3 cysteines and an exchangeable S-adenosyl-L-methionine.</text>
</comment>
<comment type="subunit">
    <text evidence="1">Monomer.</text>
</comment>
<comment type="subcellular location">
    <subcellularLocation>
        <location evidence="1">Cytoplasm</location>
    </subcellularLocation>
</comment>
<comment type="similarity">
    <text evidence="1">Belongs to the methylthiotransferase family. MiaB subfamily.</text>
</comment>
<dbReference type="EC" id="2.8.4.3" evidence="1"/>
<dbReference type="EMBL" id="CP000348">
    <property type="protein sequence ID" value="ABJ78430.1"/>
    <property type="molecule type" value="Genomic_DNA"/>
</dbReference>
<dbReference type="RefSeq" id="WP_002750674.1">
    <property type="nucleotide sequence ID" value="NC_008508.1"/>
</dbReference>
<dbReference type="SMR" id="Q053R5"/>
<dbReference type="KEGG" id="lbl:LBL_0882"/>
<dbReference type="HOGENOM" id="CLU_018697_2_0_12"/>
<dbReference type="GO" id="GO:0005829">
    <property type="term" value="C:cytosol"/>
    <property type="evidence" value="ECO:0007669"/>
    <property type="project" value="TreeGrafter"/>
</dbReference>
<dbReference type="GO" id="GO:0051539">
    <property type="term" value="F:4 iron, 4 sulfur cluster binding"/>
    <property type="evidence" value="ECO:0007669"/>
    <property type="project" value="UniProtKB-UniRule"/>
</dbReference>
<dbReference type="GO" id="GO:0046872">
    <property type="term" value="F:metal ion binding"/>
    <property type="evidence" value="ECO:0007669"/>
    <property type="project" value="UniProtKB-KW"/>
</dbReference>
<dbReference type="GO" id="GO:0035597">
    <property type="term" value="F:N6-isopentenyladenosine methylthiotransferase activity"/>
    <property type="evidence" value="ECO:0007669"/>
    <property type="project" value="TreeGrafter"/>
</dbReference>
<dbReference type="CDD" id="cd01335">
    <property type="entry name" value="Radical_SAM"/>
    <property type="match status" value="1"/>
</dbReference>
<dbReference type="FunFam" id="3.40.50.12160:FF:000003">
    <property type="entry name" value="CDK5 regulatory subunit-associated protein 1"/>
    <property type="match status" value="1"/>
</dbReference>
<dbReference type="FunFam" id="3.80.30.20:FF:000001">
    <property type="entry name" value="tRNA-2-methylthio-N(6)-dimethylallyladenosine synthase 2"/>
    <property type="match status" value="1"/>
</dbReference>
<dbReference type="Gene3D" id="3.40.50.12160">
    <property type="entry name" value="Methylthiotransferase, N-terminal domain"/>
    <property type="match status" value="1"/>
</dbReference>
<dbReference type="Gene3D" id="3.80.30.20">
    <property type="entry name" value="tm_1862 like domain"/>
    <property type="match status" value="1"/>
</dbReference>
<dbReference type="HAMAP" id="MF_01864">
    <property type="entry name" value="tRNA_metthiotr_MiaB"/>
    <property type="match status" value="1"/>
</dbReference>
<dbReference type="InterPro" id="IPR006638">
    <property type="entry name" value="Elp3/MiaA/NifB-like_rSAM"/>
</dbReference>
<dbReference type="InterPro" id="IPR005839">
    <property type="entry name" value="Methylthiotransferase"/>
</dbReference>
<dbReference type="InterPro" id="IPR020612">
    <property type="entry name" value="Methylthiotransferase_CS"/>
</dbReference>
<dbReference type="InterPro" id="IPR013848">
    <property type="entry name" value="Methylthiotransferase_N"/>
</dbReference>
<dbReference type="InterPro" id="IPR038135">
    <property type="entry name" value="Methylthiotransferase_N_sf"/>
</dbReference>
<dbReference type="InterPro" id="IPR006463">
    <property type="entry name" value="MiaB_methiolase"/>
</dbReference>
<dbReference type="InterPro" id="IPR007197">
    <property type="entry name" value="rSAM"/>
</dbReference>
<dbReference type="InterPro" id="IPR023404">
    <property type="entry name" value="rSAM_horseshoe"/>
</dbReference>
<dbReference type="InterPro" id="IPR002792">
    <property type="entry name" value="TRAM_dom"/>
</dbReference>
<dbReference type="NCBIfam" id="TIGR01574">
    <property type="entry name" value="miaB-methiolase"/>
    <property type="match status" value="1"/>
</dbReference>
<dbReference type="NCBIfam" id="TIGR00089">
    <property type="entry name" value="MiaB/RimO family radical SAM methylthiotransferase"/>
    <property type="match status" value="1"/>
</dbReference>
<dbReference type="PANTHER" id="PTHR43020">
    <property type="entry name" value="CDK5 REGULATORY SUBUNIT-ASSOCIATED PROTEIN 1"/>
    <property type="match status" value="1"/>
</dbReference>
<dbReference type="PANTHER" id="PTHR43020:SF2">
    <property type="entry name" value="MITOCHONDRIAL TRNA METHYLTHIOTRANSFERASE CDK5RAP1"/>
    <property type="match status" value="1"/>
</dbReference>
<dbReference type="Pfam" id="PF04055">
    <property type="entry name" value="Radical_SAM"/>
    <property type="match status" value="1"/>
</dbReference>
<dbReference type="Pfam" id="PF01938">
    <property type="entry name" value="TRAM"/>
    <property type="match status" value="1"/>
</dbReference>
<dbReference type="Pfam" id="PF00919">
    <property type="entry name" value="UPF0004"/>
    <property type="match status" value="1"/>
</dbReference>
<dbReference type="SFLD" id="SFLDF00273">
    <property type="entry name" value="(dimethylallyl)adenosine_tRNA"/>
    <property type="match status" value="1"/>
</dbReference>
<dbReference type="SFLD" id="SFLDG01082">
    <property type="entry name" value="B12-binding_domain_containing"/>
    <property type="match status" value="1"/>
</dbReference>
<dbReference type="SFLD" id="SFLDF00413">
    <property type="entry name" value="CDK5RAP1"/>
    <property type="match status" value="1"/>
</dbReference>
<dbReference type="SFLD" id="SFLDS00029">
    <property type="entry name" value="Radical_SAM"/>
    <property type="match status" value="1"/>
</dbReference>
<dbReference type="SMART" id="SM00729">
    <property type="entry name" value="Elp3"/>
    <property type="match status" value="1"/>
</dbReference>
<dbReference type="SUPFAM" id="SSF102114">
    <property type="entry name" value="Radical SAM enzymes"/>
    <property type="match status" value="1"/>
</dbReference>
<dbReference type="PROSITE" id="PS51449">
    <property type="entry name" value="MTTASE_N"/>
    <property type="match status" value="1"/>
</dbReference>
<dbReference type="PROSITE" id="PS01278">
    <property type="entry name" value="MTTASE_RADICAL"/>
    <property type="match status" value="1"/>
</dbReference>
<dbReference type="PROSITE" id="PS51918">
    <property type="entry name" value="RADICAL_SAM"/>
    <property type="match status" value="1"/>
</dbReference>
<dbReference type="PROSITE" id="PS50926">
    <property type="entry name" value="TRAM"/>
    <property type="match status" value="1"/>
</dbReference>
<feature type="chain" id="PRO_0000374361" description="tRNA-2-methylthio-N(6)-dimethylallyladenosine synthase">
    <location>
        <begin position="1"/>
        <end position="449"/>
    </location>
</feature>
<feature type="domain" description="MTTase N-terminal" evidence="1">
    <location>
        <begin position="11"/>
        <end position="127"/>
    </location>
</feature>
<feature type="domain" description="Radical SAM core" evidence="2">
    <location>
        <begin position="150"/>
        <end position="378"/>
    </location>
</feature>
<feature type="domain" description="TRAM" evidence="1">
    <location>
        <begin position="381"/>
        <end position="449"/>
    </location>
</feature>
<feature type="binding site" evidence="1">
    <location>
        <position position="20"/>
    </location>
    <ligand>
        <name>[4Fe-4S] cluster</name>
        <dbReference type="ChEBI" id="CHEBI:49883"/>
        <label>1</label>
    </ligand>
</feature>
<feature type="binding site" evidence="1">
    <location>
        <position position="56"/>
    </location>
    <ligand>
        <name>[4Fe-4S] cluster</name>
        <dbReference type="ChEBI" id="CHEBI:49883"/>
        <label>1</label>
    </ligand>
</feature>
<feature type="binding site" evidence="1">
    <location>
        <position position="90"/>
    </location>
    <ligand>
        <name>[4Fe-4S] cluster</name>
        <dbReference type="ChEBI" id="CHEBI:49883"/>
        <label>1</label>
    </ligand>
</feature>
<feature type="binding site" evidence="1">
    <location>
        <position position="164"/>
    </location>
    <ligand>
        <name>[4Fe-4S] cluster</name>
        <dbReference type="ChEBI" id="CHEBI:49883"/>
        <label>2</label>
        <note>4Fe-4S-S-AdoMet</note>
    </ligand>
</feature>
<feature type="binding site" evidence="1">
    <location>
        <position position="168"/>
    </location>
    <ligand>
        <name>[4Fe-4S] cluster</name>
        <dbReference type="ChEBI" id="CHEBI:49883"/>
        <label>2</label>
        <note>4Fe-4S-S-AdoMet</note>
    </ligand>
</feature>
<feature type="binding site" evidence="1">
    <location>
        <position position="171"/>
    </location>
    <ligand>
        <name>[4Fe-4S] cluster</name>
        <dbReference type="ChEBI" id="CHEBI:49883"/>
        <label>2</label>
        <note>4Fe-4S-S-AdoMet</note>
    </ligand>
</feature>
<protein>
    <recommendedName>
        <fullName evidence="1">tRNA-2-methylthio-N(6)-dimethylallyladenosine synthase</fullName>
        <ecNumber evidence="1">2.8.4.3</ecNumber>
    </recommendedName>
    <alternativeName>
        <fullName evidence="1">(Dimethylallyl)adenosine tRNA methylthiotransferase MiaB</fullName>
    </alternativeName>
    <alternativeName>
        <fullName evidence="1">tRNA-i(6)A37 methylthiotransferase</fullName>
    </alternativeName>
</protein>
<proteinExistence type="inferred from homology"/>
<keyword id="KW-0004">4Fe-4S</keyword>
<keyword id="KW-0963">Cytoplasm</keyword>
<keyword id="KW-0408">Iron</keyword>
<keyword id="KW-0411">Iron-sulfur</keyword>
<keyword id="KW-0479">Metal-binding</keyword>
<keyword id="KW-0949">S-adenosyl-L-methionine</keyword>
<keyword id="KW-0808">Transferase</keyword>
<keyword id="KW-0819">tRNA processing</keyword>
<accession>Q053R5</accession>
<sequence>MGVLEREKKTGKVYIETYGCQMNEYDSGIVSSLMKDAEYSSSPDPENSDIIFLNTCAIRENAHAKIYNRLQSLGYLKKRNPELVIGVLGCMAQNLGDDLFHQELPLDLVVGPDNYRSLPELIQRIRSGEHSISLTRLSKIETYDEIEPRVVNGIQAFVTIMRGCNNFCTFCVVPYTRGRERSRDPKSIVREIQDLTEKGIRQVTLLGQNVNSYKEQGTDFAGLIQMLLDETTIERIRFTSPHPKDFPVRLLRLMAQNPRFCPNIHLPLQAGNTRVLEEMKRSYSKEEFLDVVREIRNIVPDVGITTDIIVGFPNETEEEFEDTLAVVREVQFDMAFMFKYSEREGTMARKKLPDNVSEETKSARLTKLVDLQTSISHEQNRARIGRVYSILIENTSRKSEKQLCGRTPCGRMTVFPLPEGRSASEMIGSTVSVRIESATSATLKGGILS</sequence>
<reference key="1">
    <citation type="journal article" date="2006" name="Proc. Natl. Acad. Sci. U.S.A.">
        <title>Genome reduction in Leptospira borgpetersenii reflects limited transmission potential.</title>
        <authorList>
            <person name="Bulach D.M."/>
            <person name="Zuerner R.L."/>
            <person name="Wilson P."/>
            <person name="Seemann T."/>
            <person name="McGrath A."/>
            <person name="Cullen P.A."/>
            <person name="Davis J."/>
            <person name="Johnson M."/>
            <person name="Kuczek E."/>
            <person name="Alt D.P."/>
            <person name="Peterson-Burch B."/>
            <person name="Coppel R.L."/>
            <person name="Rood J.I."/>
            <person name="Davies J.K."/>
            <person name="Adler B."/>
        </authorList>
    </citation>
    <scope>NUCLEOTIDE SEQUENCE [LARGE SCALE GENOMIC DNA]</scope>
    <source>
        <strain>L550</strain>
    </source>
</reference>
<organism>
    <name type="scientific">Leptospira borgpetersenii serovar Hardjo-bovis (strain L550)</name>
    <dbReference type="NCBI Taxonomy" id="355276"/>
    <lineage>
        <taxon>Bacteria</taxon>
        <taxon>Pseudomonadati</taxon>
        <taxon>Spirochaetota</taxon>
        <taxon>Spirochaetia</taxon>
        <taxon>Leptospirales</taxon>
        <taxon>Leptospiraceae</taxon>
        <taxon>Leptospira</taxon>
    </lineage>
</organism>